<accession>Q6G1F9</accession>
<evidence type="ECO:0000255" key="1">
    <source>
        <dbReference type="HAMAP-Rule" id="MF_00332"/>
    </source>
</evidence>
<evidence type="ECO:0000256" key="2">
    <source>
        <dbReference type="SAM" id="MobiDB-lite"/>
    </source>
</evidence>
<feature type="chain" id="PRO_0000225939" description="Chaperone protein DnaK">
    <location>
        <begin position="1"/>
        <end position="630"/>
    </location>
</feature>
<feature type="region of interest" description="Disordered" evidence="2">
    <location>
        <begin position="515"/>
        <end position="535"/>
    </location>
</feature>
<feature type="region of interest" description="Disordered" evidence="2">
    <location>
        <begin position="600"/>
        <end position="630"/>
    </location>
</feature>
<feature type="compositionally biased region" description="Basic and acidic residues" evidence="2">
    <location>
        <begin position="515"/>
        <end position="529"/>
    </location>
</feature>
<feature type="modified residue" description="Phosphothreonine; by autocatalysis" evidence="1">
    <location>
        <position position="198"/>
    </location>
</feature>
<protein>
    <recommendedName>
        <fullName evidence="1">Chaperone protein DnaK</fullName>
    </recommendedName>
    <alternativeName>
        <fullName evidence="1">HSP70</fullName>
    </alternativeName>
    <alternativeName>
        <fullName evidence="1">Heat shock 70 kDa protein</fullName>
    </alternativeName>
    <alternativeName>
        <fullName evidence="1">Heat shock protein 70</fullName>
    </alternativeName>
</protein>
<dbReference type="EMBL" id="BX897700">
    <property type="protein sequence ID" value="CAF25566.1"/>
    <property type="molecule type" value="Genomic_DNA"/>
</dbReference>
<dbReference type="RefSeq" id="WP_011178894.1">
    <property type="nucleotide sequence ID" value="NC_005955.1"/>
</dbReference>
<dbReference type="SMR" id="Q6G1F9"/>
<dbReference type="KEGG" id="bqu:BQ00590"/>
<dbReference type="eggNOG" id="COG0443">
    <property type="taxonomic scope" value="Bacteria"/>
</dbReference>
<dbReference type="HOGENOM" id="CLU_005965_2_1_5"/>
<dbReference type="OrthoDB" id="9766019at2"/>
<dbReference type="Proteomes" id="UP000000597">
    <property type="component" value="Chromosome"/>
</dbReference>
<dbReference type="GO" id="GO:0005524">
    <property type="term" value="F:ATP binding"/>
    <property type="evidence" value="ECO:0007669"/>
    <property type="project" value="UniProtKB-UniRule"/>
</dbReference>
<dbReference type="GO" id="GO:0140662">
    <property type="term" value="F:ATP-dependent protein folding chaperone"/>
    <property type="evidence" value="ECO:0007669"/>
    <property type="project" value="InterPro"/>
</dbReference>
<dbReference type="GO" id="GO:0051082">
    <property type="term" value="F:unfolded protein binding"/>
    <property type="evidence" value="ECO:0007669"/>
    <property type="project" value="InterPro"/>
</dbReference>
<dbReference type="CDD" id="cd11733">
    <property type="entry name" value="ASKHA_NBD_HSP70_HSPA9"/>
    <property type="match status" value="1"/>
</dbReference>
<dbReference type="FunFam" id="2.60.34.10:FF:000014">
    <property type="entry name" value="Chaperone protein DnaK HSP70"/>
    <property type="match status" value="1"/>
</dbReference>
<dbReference type="FunFam" id="1.20.1270.10:FF:000001">
    <property type="entry name" value="Molecular chaperone DnaK"/>
    <property type="match status" value="1"/>
</dbReference>
<dbReference type="FunFam" id="3.30.420.40:FF:000004">
    <property type="entry name" value="Molecular chaperone DnaK"/>
    <property type="match status" value="1"/>
</dbReference>
<dbReference type="FunFam" id="3.90.640.10:FF:000003">
    <property type="entry name" value="Molecular chaperone DnaK"/>
    <property type="match status" value="1"/>
</dbReference>
<dbReference type="Gene3D" id="1.20.1270.10">
    <property type="match status" value="1"/>
</dbReference>
<dbReference type="Gene3D" id="3.30.420.40">
    <property type="match status" value="2"/>
</dbReference>
<dbReference type="Gene3D" id="3.90.640.10">
    <property type="entry name" value="Actin, Chain A, domain 4"/>
    <property type="match status" value="1"/>
</dbReference>
<dbReference type="Gene3D" id="2.60.34.10">
    <property type="entry name" value="Substrate Binding Domain Of DNAk, Chain A, domain 1"/>
    <property type="match status" value="1"/>
</dbReference>
<dbReference type="HAMAP" id="MF_00332">
    <property type="entry name" value="DnaK"/>
    <property type="match status" value="1"/>
</dbReference>
<dbReference type="InterPro" id="IPR043129">
    <property type="entry name" value="ATPase_NBD"/>
</dbReference>
<dbReference type="InterPro" id="IPR012725">
    <property type="entry name" value="Chaperone_DnaK"/>
</dbReference>
<dbReference type="InterPro" id="IPR018181">
    <property type="entry name" value="Heat_shock_70_CS"/>
</dbReference>
<dbReference type="InterPro" id="IPR029048">
    <property type="entry name" value="HSP70_C_sf"/>
</dbReference>
<dbReference type="InterPro" id="IPR029047">
    <property type="entry name" value="HSP70_peptide-bd_sf"/>
</dbReference>
<dbReference type="InterPro" id="IPR013126">
    <property type="entry name" value="Hsp_70_fam"/>
</dbReference>
<dbReference type="NCBIfam" id="NF001413">
    <property type="entry name" value="PRK00290.1"/>
    <property type="match status" value="1"/>
</dbReference>
<dbReference type="NCBIfam" id="NF003520">
    <property type="entry name" value="PRK05183.1"/>
    <property type="match status" value="1"/>
</dbReference>
<dbReference type="NCBIfam" id="TIGR02350">
    <property type="entry name" value="prok_dnaK"/>
    <property type="match status" value="1"/>
</dbReference>
<dbReference type="PANTHER" id="PTHR19375">
    <property type="entry name" value="HEAT SHOCK PROTEIN 70KDA"/>
    <property type="match status" value="1"/>
</dbReference>
<dbReference type="Pfam" id="PF00012">
    <property type="entry name" value="HSP70"/>
    <property type="match status" value="1"/>
</dbReference>
<dbReference type="PRINTS" id="PR00301">
    <property type="entry name" value="HEATSHOCK70"/>
</dbReference>
<dbReference type="SUPFAM" id="SSF53067">
    <property type="entry name" value="Actin-like ATPase domain"/>
    <property type="match status" value="2"/>
</dbReference>
<dbReference type="SUPFAM" id="SSF100934">
    <property type="entry name" value="Heat shock protein 70kD (HSP70), C-terminal subdomain"/>
    <property type="match status" value="1"/>
</dbReference>
<dbReference type="SUPFAM" id="SSF100920">
    <property type="entry name" value="Heat shock protein 70kD (HSP70), peptide-binding domain"/>
    <property type="match status" value="1"/>
</dbReference>
<dbReference type="PROSITE" id="PS00297">
    <property type="entry name" value="HSP70_1"/>
    <property type="match status" value="1"/>
</dbReference>
<dbReference type="PROSITE" id="PS00329">
    <property type="entry name" value="HSP70_2"/>
    <property type="match status" value="1"/>
</dbReference>
<dbReference type="PROSITE" id="PS01036">
    <property type="entry name" value="HSP70_3"/>
    <property type="match status" value="1"/>
</dbReference>
<name>DNAK_BARQU</name>
<gene>
    <name evidence="1" type="primary">dnaK</name>
    <name type="ordered locus">BQ00590</name>
</gene>
<keyword id="KW-0067">ATP-binding</keyword>
<keyword id="KW-0143">Chaperone</keyword>
<keyword id="KW-0547">Nucleotide-binding</keyword>
<keyword id="KW-0597">Phosphoprotein</keyword>
<keyword id="KW-0346">Stress response</keyword>
<proteinExistence type="inferred from homology"/>
<organism>
    <name type="scientific">Bartonella quintana (strain Toulouse)</name>
    <name type="common">Rochalimaea quintana</name>
    <dbReference type="NCBI Taxonomy" id="283165"/>
    <lineage>
        <taxon>Bacteria</taxon>
        <taxon>Pseudomonadati</taxon>
        <taxon>Pseudomonadota</taxon>
        <taxon>Alphaproteobacteria</taxon>
        <taxon>Hyphomicrobiales</taxon>
        <taxon>Bartonellaceae</taxon>
        <taxon>Bartonella</taxon>
    </lineage>
</organism>
<comment type="function">
    <text evidence="1">Acts as a chaperone.</text>
</comment>
<comment type="induction">
    <text evidence="1">By stress conditions e.g. heat shock.</text>
</comment>
<comment type="similarity">
    <text evidence="1">Belongs to the heat shock protein 70 family.</text>
</comment>
<sequence length="630" mass="68161">MAKVIGIDLGTTNSCVAVMDGKNAKVIENSEGARTTPSVVAFTDGGERLVGQPAKRQAVTNPEGTIFAVKRLIGRRFDDPMVEKDKALVPYKIVKGDNGDAWVEEAGKKYSPSQISAMILQKMKETAESYLGEKVEQAVITVPAYFNDAQRQATKDAGKIAGLEVLRIINEPTAAALAYGLDKKDGKTIAVYDLGGGTFDISVLEIGDGVFEVKSTNGDTFLGGEDFDMRLVGYFADEFKKEQGIDLKNDKLALQRLKEAAEKAKIELSSSQQTEINLPFITADQSGPKHLTMKLTRAKFESLVDDLVQRTIEPCKAALKDAGLKAGEIDEVVLVGGMTRMPKIQEVVQSFFGKDPHKGVNPDEVVAMGAAIQGGVLQGDVKDVLLLDVTPLSLGIETLGGVFTRLIERNTTIPTKKSQVFSTADDNQNAVTIRVFQGEREMANDNKLLAQFDLVGIPPAPRGVPQIEVTFDIDANGIVNVSAKDKGTGKEHQIRIQASGGLSDADIEKMVKDAEEHAAEDKKRREGVEARNQAEALIHSTEKSLTEYGDKISTEEKEQIETAISDLKSALDGTDPEEVTAKMQKLAEVSMKLGQAMYEASQAATANTETDTKSDDVVDADFEEISDKKK</sequence>
<reference key="1">
    <citation type="journal article" date="2004" name="Proc. Natl. Acad. Sci. U.S.A.">
        <title>The louse-borne human pathogen Bartonella quintana is a genomic derivative of the zoonotic agent Bartonella henselae.</title>
        <authorList>
            <person name="Alsmark U.C.M."/>
            <person name="Frank A.C."/>
            <person name="Karlberg E.O."/>
            <person name="Legault B.-A."/>
            <person name="Ardell D.H."/>
            <person name="Canbaeck B."/>
            <person name="Eriksson A.-S."/>
            <person name="Naeslund A.K."/>
            <person name="Handley S.A."/>
            <person name="Huvet M."/>
            <person name="La Scola B."/>
            <person name="Holmberg M."/>
            <person name="Andersson S.G.E."/>
        </authorList>
    </citation>
    <scope>NUCLEOTIDE SEQUENCE [LARGE SCALE GENOMIC DNA]</scope>
    <source>
        <strain>Toulouse</strain>
    </source>
</reference>